<reference key="1">
    <citation type="submission" date="1995-10" db="EMBL/GenBank/DDBJ databases">
        <authorList>
            <person name="Delius H."/>
        </authorList>
    </citation>
    <scope>NUCLEOTIDE SEQUENCE [GENOMIC DNA]</scope>
</reference>
<evidence type="ECO:0000250" key="1">
    <source>
        <dbReference type="UniProtKB" id="P0DKA0"/>
    </source>
</evidence>
<evidence type="ECO:0000256" key="2">
    <source>
        <dbReference type="SAM" id="MobiDB-lite"/>
    </source>
</evidence>
<evidence type="ECO:0000305" key="3"/>
<proteinExistence type="inferred from homology"/>
<organism>
    <name type="scientific">Human papillomavirus 29</name>
    <dbReference type="NCBI Taxonomy" id="37112"/>
    <lineage>
        <taxon>Viruses</taxon>
        <taxon>Monodnaviria</taxon>
        <taxon>Shotokuvirae</taxon>
        <taxon>Cossaviricota</taxon>
        <taxon>Papovaviricetes</taxon>
        <taxon>Zurhausenvirales</taxon>
        <taxon>Papillomaviridae</taxon>
        <taxon>Firstpapillomavirinae</taxon>
        <taxon>Alphapapillomavirus</taxon>
        <taxon>Alphapapillomavirus 2</taxon>
    </lineage>
</organism>
<sequence>MAKHSTQEVPATGPLYASHNTTRSPTQAPLGPEEGQERKRRRLEAVGPGPQQQQQQQHQQQQQQQTPTHTPSTQACARTGGPVDSNRTRDCDSTSQNPYRHPSDPDCAPVIHLRGDPNSLKCFRYRLQNGKKGLYCKASSTWRWSCEPENQSAFVTIWYTSVTQRAEFLANVKIPPGMQAILGHMSVF</sequence>
<comment type="function">
    <text evidence="1">Plays a role in limiting the replication of viral DNA in keratinocytes. Recruits the host NCoR/SMRT complex to viral replication foci to mediate repression of both viral replication and transcription.</text>
</comment>
<comment type="subcellular location">
    <subcellularLocation>
        <location evidence="1">Host nucleus</location>
    </subcellularLocation>
</comment>
<comment type="similarity">
    <text evidence="3">Belongs to the papillomaviridae E8^E2C protein family.</text>
</comment>
<name>VE8E2_HPV29</name>
<organismHost>
    <name type="scientific">Homo sapiens</name>
    <name type="common">Human</name>
    <dbReference type="NCBI Taxonomy" id="9606"/>
</organismHost>
<dbReference type="EMBL" id="U31784">
    <property type="status" value="NOT_ANNOTATED_CDS"/>
    <property type="molecule type" value="Genomic_DNA"/>
</dbReference>
<dbReference type="SMR" id="P0DKA3"/>
<dbReference type="Proteomes" id="UP000009115">
    <property type="component" value="Segment"/>
</dbReference>
<dbReference type="GO" id="GO:0042025">
    <property type="term" value="C:host cell nucleus"/>
    <property type="evidence" value="ECO:0007669"/>
    <property type="project" value="UniProtKB-SubCell"/>
</dbReference>
<dbReference type="GO" id="GO:0003677">
    <property type="term" value="F:DNA binding"/>
    <property type="evidence" value="ECO:0007669"/>
    <property type="project" value="InterPro"/>
</dbReference>
<dbReference type="GO" id="GO:0003700">
    <property type="term" value="F:DNA-binding transcription factor activity"/>
    <property type="evidence" value="ECO:0007669"/>
    <property type="project" value="InterPro"/>
</dbReference>
<dbReference type="GO" id="GO:0006275">
    <property type="term" value="P:regulation of DNA replication"/>
    <property type="evidence" value="ECO:0007669"/>
    <property type="project" value="InterPro"/>
</dbReference>
<dbReference type="Gene3D" id="3.30.70.330">
    <property type="match status" value="1"/>
</dbReference>
<dbReference type="InterPro" id="IPR035975">
    <property type="entry name" value="E2/EBNA1_C_sf"/>
</dbReference>
<dbReference type="InterPro" id="IPR012677">
    <property type="entry name" value="Nucleotide-bd_a/b_plait_sf"/>
</dbReference>
<dbReference type="InterPro" id="IPR000427">
    <property type="entry name" value="Papillomavirus_E2_C"/>
</dbReference>
<dbReference type="Pfam" id="PF00511">
    <property type="entry name" value="PPV_E2_C"/>
    <property type="match status" value="1"/>
</dbReference>
<dbReference type="SUPFAM" id="SSF54957">
    <property type="entry name" value="Viral DNA-binding domain"/>
    <property type="match status" value="1"/>
</dbReference>
<accession>P0DKA3</accession>
<keyword id="KW-1048">Host nucleus</keyword>
<keyword id="KW-1185">Reference proteome</keyword>
<protein>
    <recommendedName>
        <fullName>Protein E8^E2C</fullName>
    </recommendedName>
</protein>
<feature type="chain" id="PRO_0000438743" description="Protein E8^E2C">
    <location>
        <begin position="1"/>
        <end position="188"/>
    </location>
</feature>
<feature type="region of interest" description="Disordered" evidence="2">
    <location>
        <begin position="1"/>
        <end position="105"/>
    </location>
</feature>
<feature type="compositionally biased region" description="Polar residues" evidence="2">
    <location>
        <begin position="18"/>
        <end position="27"/>
    </location>
</feature>
<feature type="compositionally biased region" description="Low complexity" evidence="2">
    <location>
        <begin position="51"/>
        <end position="65"/>
    </location>
</feature>
<feature type="compositionally biased region" description="Polar residues" evidence="2">
    <location>
        <begin position="66"/>
        <end position="76"/>
    </location>
</feature>